<dbReference type="SMR" id="P23809"/>
<dbReference type="GO" id="GO:0009538">
    <property type="term" value="C:photosystem I reaction center"/>
    <property type="evidence" value="ECO:0007669"/>
    <property type="project" value="InterPro"/>
</dbReference>
<dbReference type="GO" id="GO:0031676">
    <property type="term" value="C:plasma membrane-derived thylakoid membrane"/>
    <property type="evidence" value="ECO:0007669"/>
    <property type="project" value="UniProtKB-SubCell"/>
</dbReference>
<dbReference type="GO" id="GO:0015979">
    <property type="term" value="P:photosynthesis"/>
    <property type="evidence" value="ECO:0007669"/>
    <property type="project" value="UniProtKB-UniRule"/>
</dbReference>
<dbReference type="Gene3D" id="2.30.30.50">
    <property type="match status" value="1"/>
</dbReference>
<dbReference type="HAMAP" id="MF_00613">
    <property type="entry name" value="PSI_PsaE"/>
    <property type="match status" value="1"/>
</dbReference>
<dbReference type="InterPro" id="IPR008990">
    <property type="entry name" value="Elect_transpt_acc-like_dom_sf"/>
</dbReference>
<dbReference type="InterPro" id="IPR003375">
    <property type="entry name" value="PSI_PsaE"/>
</dbReference>
<dbReference type="NCBIfam" id="NF002745">
    <property type="entry name" value="PRK02749.1"/>
    <property type="match status" value="1"/>
</dbReference>
<dbReference type="PANTHER" id="PTHR34549">
    <property type="entry name" value="PHOTOSYSTEM I REACTION CENTER SUBUNIT IV A, CHLOROPLASTIC-RELATED"/>
    <property type="match status" value="1"/>
</dbReference>
<dbReference type="PANTHER" id="PTHR34549:SF2">
    <property type="entry name" value="PHOTOSYSTEM I SUBUNIT IV"/>
    <property type="match status" value="1"/>
</dbReference>
<dbReference type="Pfam" id="PF02427">
    <property type="entry name" value="PSI_PsaE"/>
    <property type="match status" value="1"/>
</dbReference>
<dbReference type="SUPFAM" id="SSF50090">
    <property type="entry name" value="Electron transport accessory proteins"/>
    <property type="match status" value="1"/>
</dbReference>
<gene>
    <name type="primary">psaE</name>
</gene>
<name>PSAE_MICDP</name>
<keyword id="KW-0903">Direct protein sequencing</keyword>
<keyword id="KW-0472">Membrane</keyword>
<keyword id="KW-0602">Photosynthesis</keyword>
<keyword id="KW-0603">Photosystem I</keyword>
<keyword id="KW-0793">Thylakoid</keyword>
<evidence type="ECO:0000250" key="1"/>
<evidence type="ECO:0000305" key="2"/>
<feature type="chain" id="PRO_0000204401" description="Photosystem I reaction center subunit IV">
    <location>
        <begin position="1"/>
        <end position="66"/>
    </location>
</feature>
<reference key="1">
    <citation type="journal article" date="1991" name="Biol. Chem. Hoppe-Seyler">
        <title>The amino-acid sequence of three proteins of photosystem I of the cyanobacterium Fremyella diplosiphon (Calothrix sp PCC 7601).</title>
        <authorList>
            <person name="Mann K."/>
            <person name="Schlenkrich T."/>
            <person name="Bauer M."/>
            <person name="Huber R."/>
        </authorList>
    </citation>
    <scope>PROTEIN SEQUENCE</scope>
    <source>
        <strain>UTEX 590 / SAG B 1429-1b</strain>
    </source>
</reference>
<protein>
    <recommendedName>
        <fullName>Photosystem I reaction center subunit IV</fullName>
    </recommendedName>
</protein>
<accession>P23809</accession>
<proteinExistence type="evidence at protein level"/>
<comment type="function">
    <text evidence="1">Stabilizes the interaction between PsaC and the PSI core, assists the docking of the ferredoxin to PSI and interacts with ferredoxin-NADP oxidoreductase.</text>
</comment>
<comment type="subcellular location">
    <subcellularLocation>
        <location evidence="1">Cellular thylakoid membrane</location>
        <topology evidence="1">Peripheral membrane protein</topology>
    </subcellularLocation>
</comment>
<comment type="similarity">
    <text evidence="2">Belongs to the PsaE family.</text>
</comment>
<sequence>VQRGSKVRILRPESYWFQDVGTVASIDQSGIKYSVIVRFDKVNYSGINTNNFAEDELLEVAPPAAK</sequence>
<organism>
    <name type="scientific">Microchaete diplosiphon</name>
    <name type="common">Fremyella diplosiphon</name>
    <dbReference type="NCBI Taxonomy" id="1197"/>
    <lineage>
        <taxon>Bacteria</taxon>
        <taxon>Bacillati</taxon>
        <taxon>Cyanobacteriota</taxon>
        <taxon>Cyanophyceae</taxon>
        <taxon>Nostocales</taxon>
        <taxon>Rivulariaceae</taxon>
        <taxon>Microchaete</taxon>
    </lineage>
</organism>